<organism>
    <name type="scientific">Colobus guereza</name>
    <name type="common">Mantled guereza</name>
    <name type="synonym">Eastern black-and-white colobus monkey</name>
    <dbReference type="NCBI Taxonomy" id="33548"/>
    <lineage>
        <taxon>Eukaryota</taxon>
        <taxon>Metazoa</taxon>
        <taxon>Chordata</taxon>
        <taxon>Craniata</taxon>
        <taxon>Vertebrata</taxon>
        <taxon>Euteleostomi</taxon>
        <taxon>Mammalia</taxon>
        <taxon>Eutheria</taxon>
        <taxon>Euarchontoglires</taxon>
        <taxon>Primates</taxon>
        <taxon>Haplorrhini</taxon>
        <taxon>Catarrhini</taxon>
        <taxon>Cercopithecidae</taxon>
        <taxon>Colobinae</taxon>
        <taxon>Colobus</taxon>
    </lineage>
</organism>
<feature type="signal peptide" evidence="1">
    <location>
        <begin position="1"/>
        <end position="30"/>
    </location>
</feature>
<feature type="propeptide" id="PRO_0000318278" evidence="1">
    <location>
        <begin position="31"/>
        <end position="152"/>
    </location>
</feature>
<feature type="chain" id="PRO_0000318279" description="Proprotein convertase subtilisin/kexin type 9">
    <location>
        <begin position="153"/>
        <end position="692"/>
    </location>
</feature>
<feature type="domain" description="Inhibitor I9" evidence="3">
    <location>
        <begin position="77"/>
        <end position="149"/>
    </location>
</feature>
<feature type="domain" description="Peptidase S8" evidence="4">
    <location>
        <begin position="155"/>
        <end position="444"/>
    </location>
</feature>
<feature type="region of interest" description="C-terminal domain" evidence="1">
    <location>
        <begin position="450"/>
        <end position="692"/>
    </location>
</feature>
<feature type="active site" description="Charge relay system" evidence="4">
    <location>
        <position position="186"/>
    </location>
</feature>
<feature type="active site" description="Charge relay system" evidence="4">
    <location>
        <position position="226"/>
    </location>
</feature>
<feature type="active site" description="Charge relay system" evidence="4">
    <location>
        <position position="386"/>
    </location>
</feature>
<feature type="site" description="Cleavage; by autolysis" evidence="1">
    <location>
        <begin position="152"/>
        <end position="153"/>
    </location>
</feature>
<feature type="site" description="Cleavage; by furin and PCSK5" evidence="1">
    <location>
        <begin position="218"/>
        <end position="219"/>
    </location>
</feature>
<feature type="modified residue" description="Sulfotyrosine" evidence="1">
    <location>
        <position position="38"/>
    </location>
</feature>
<feature type="modified residue" description="Phosphoserine" evidence="2">
    <location>
        <position position="47"/>
    </location>
</feature>
<feature type="modified residue" description="Phosphoserine" evidence="2">
    <location>
        <position position="688"/>
    </location>
</feature>
<feature type="glycosylation site" description="N-linked (GlcNAc...) asparagine" evidence="3">
    <location>
        <position position="533"/>
    </location>
</feature>
<feature type="disulfide bond" evidence="3">
    <location>
        <begin position="223"/>
        <end position="255"/>
    </location>
</feature>
<feature type="disulfide bond" evidence="3">
    <location>
        <begin position="323"/>
        <end position="358"/>
    </location>
</feature>
<feature type="disulfide bond" evidence="3">
    <location>
        <begin position="457"/>
        <end position="527"/>
    </location>
</feature>
<feature type="disulfide bond" evidence="3">
    <location>
        <begin position="477"/>
        <end position="526"/>
    </location>
</feature>
<feature type="disulfide bond" evidence="3">
    <location>
        <begin position="486"/>
        <end position="509"/>
    </location>
</feature>
<feature type="disulfide bond" evidence="3">
    <location>
        <begin position="534"/>
        <end position="601"/>
    </location>
</feature>
<feature type="disulfide bond" evidence="3">
    <location>
        <begin position="552"/>
        <end position="600"/>
    </location>
</feature>
<feature type="disulfide bond" evidence="3">
    <location>
        <begin position="562"/>
        <end position="588"/>
    </location>
</feature>
<feature type="disulfide bond" evidence="3">
    <location>
        <begin position="608"/>
        <end position="679"/>
    </location>
</feature>
<feature type="disulfide bond" evidence="3">
    <location>
        <begin position="626"/>
        <end position="678"/>
    </location>
</feature>
<feature type="disulfide bond" evidence="3">
    <location>
        <begin position="635"/>
        <end position="654"/>
    </location>
</feature>
<protein>
    <recommendedName>
        <fullName>Proprotein convertase subtilisin/kexin type 9</fullName>
        <ecNumber>3.4.21.-</ecNumber>
    </recommendedName>
    <alternativeName>
        <fullName>Proprotein convertase 9</fullName>
        <shortName>PC9</shortName>
    </alternativeName>
    <alternativeName>
        <fullName>Subtilisin/kexin-like protease PC9</fullName>
    </alternativeName>
</protein>
<evidence type="ECO:0000250" key="1"/>
<evidence type="ECO:0000250" key="2">
    <source>
        <dbReference type="UniProtKB" id="Q8NBP7"/>
    </source>
</evidence>
<evidence type="ECO:0000255" key="3"/>
<evidence type="ECO:0000255" key="4">
    <source>
        <dbReference type="PROSITE-ProRule" id="PRU01240"/>
    </source>
</evidence>
<evidence type="ECO:0000305" key="5"/>
<accession>A8T672</accession>
<sequence>MGTVSSRRSWWPLPLPLLLLLLLGLAGARAQEDEDGDYEELVLALRSEEDGLADAPEHGATATFHRCAKDPWRLPGTYVVVLKEETHRSQSERTARRLQAQAARRGYLTKILHVFHHLLPGFLVKMSGDLLELALKLPHVDYIEEDSSVFAQSIPWNLERITPARYRADEYQPPKGGSLVEVYLLDTSIQSDHREIEGRVMVTDFESVPEEDGTRFHRQASKCDSHGTHLAGVVSGRDAGVAKGAGLRSLRVLNCQGKGTVSGTLIGLEFIRKSQLVQPVGPLVVLLPLAGGYSRVFNAACQRLARAGVVLVTAAGNFRDDACLYSPASAPEVITVGATNAQDQPVTLGTLGTNFGRCVDLFAPGEDIIGASSDCSTCFVSRSGTSQAAAHVAGIAAMMLSAEPELTLAELRQRLIHFSAKDVINEAWFPEDQRVLTPNLVAALPPSTHRAGWQLFCRTVWSAHSGPTRMATAVVRCAPDEELLSCSSFSRSGKRRGERIEAQGGKRVCRAHNAFGGEGVYAIARCCLLPQVNCSVHTAPPAGASMGTRVHCHQQGHVLTGCSSHWEVEDLGTHKPPVLRPRGQPNQCVGHREASIHASCCHAPGLECKVKEHGIPAPQEQVIVACEDGWTLTGCNALPGTSHVLGAYAVDNTCVVRSRDVSTTGSTSEEAMAAVAICCRSRHLVQASQELQ</sequence>
<proteinExistence type="evidence at transcript level"/>
<reference key="1">
    <citation type="journal article" date="2007" name="PLoS ONE">
        <title>Evidence for positive selection in the C-terminal domain of the cholesterol metabolism gene PCSK9 based on phylogenetic analysis in 14 primate species.</title>
        <authorList>
            <person name="Ding K."/>
            <person name="McDonough S.J."/>
            <person name="Kullo I.J."/>
        </authorList>
    </citation>
    <scope>NUCLEOTIDE SEQUENCE [MRNA]</scope>
</reference>
<name>PCSK9_COLGU</name>
<gene>
    <name type="primary">PCSK9</name>
</gene>
<keyword id="KW-0053">Apoptosis</keyword>
<keyword id="KW-0068">Autocatalytic cleavage</keyword>
<keyword id="KW-0106">Calcium</keyword>
<keyword id="KW-0153">Cholesterol metabolism</keyword>
<keyword id="KW-0963">Cytoplasm</keyword>
<keyword id="KW-1015">Disulfide bond</keyword>
<keyword id="KW-0256">Endoplasmic reticulum</keyword>
<keyword id="KW-0967">Endosome</keyword>
<keyword id="KW-0325">Glycoprotein</keyword>
<keyword id="KW-0333">Golgi apparatus</keyword>
<keyword id="KW-0378">Hydrolase</keyword>
<keyword id="KW-0443">Lipid metabolism</keyword>
<keyword id="KW-0458">Lysosome</keyword>
<keyword id="KW-0597">Phosphoprotein</keyword>
<keyword id="KW-0645">Protease</keyword>
<keyword id="KW-0964">Secreted</keyword>
<keyword id="KW-0720">Serine protease</keyword>
<keyword id="KW-0732">Signal</keyword>
<keyword id="KW-0753">Steroid metabolism</keyword>
<keyword id="KW-1207">Sterol metabolism</keyword>
<keyword id="KW-0765">Sulfation</keyword>
<keyword id="KW-0865">Zymogen</keyword>
<dbReference type="EC" id="3.4.21.-"/>
<dbReference type="EMBL" id="EF692503">
    <property type="protein sequence ID" value="ABV59223.1"/>
    <property type="molecule type" value="mRNA"/>
</dbReference>
<dbReference type="SMR" id="A8T672"/>
<dbReference type="GlyCosmos" id="A8T672">
    <property type="glycosylation" value="1 site, No reported glycans"/>
</dbReference>
<dbReference type="GO" id="GO:0009986">
    <property type="term" value="C:cell surface"/>
    <property type="evidence" value="ECO:0000250"/>
    <property type="project" value="UniProtKB"/>
</dbReference>
<dbReference type="GO" id="GO:0005737">
    <property type="term" value="C:cytoplasm"/>
    <property type="evidence" value="ECO:0000250"/>
    <property type="project" value="UniProtKB"/>
</dbReference>
<dbReference type="GO" id="GO:0005769">
    <property type="term" value="C:early endosome"/>
    <property type="evidence" value="ECO:0000250"/>
    <property type="project" value="UniProtKB"/>
</dbReference>
<dbReference type="GO" id="GO:0005783">
    <property type="term" value="C:endoplasmic reticulum"/>
    <property type="evidence" value="ECO:0000250"/>
    <property type="project" value="UniProtKB"/>
</dbReference>
<dbReference type="GO" id="GO:0005615">
    <property type="term" value="C:extracellular space"/>
    <property type="evidence" value="ECO:0007669"/>
    <property type="project" value="TreeGrafter"/>
</dbReference>
<dbReference type="GO" id="GO:0005794">
    <property type="term" value="C:Golgi apparatus"/>
    <property type="evidence" value="ECO:0000250"/>
    <property type="project" value="UniProtKB"/>
</dbReference>
<dbReference type="GO" id="GO:0005770">
    <property type="term" value="C:late endosome"/>
    <property type="evidence" value="ECO:0000250"/>
    <property type="project" value="UniProtKB"/>
</dbReference>
<dbReference type="GO" id="GO:0005764">
    <property type="term" value="C:lysosome"/>
    <property type="evidence" value="ECO:0000250"/>
    <property type="project" value="UniProtKB"/>
</dbReference>
<dbReference type="GO" id="GO:0034185">
    <property type="term" value="F:apolipoprotein binding"/>
    <property type="evidence" value="ECO:0000250"/>
    <property type="project" value="UniProtKB"/>
</dbReference>
<dbReference type="GO" id="GO:0030169">
    <property type="term" value="F:low-density lipoprotein particle binding"/>
    <property type="evidence" value="ECO:0000250"/>
    <property type="project" value="UniProtKB"/>
</dbReference>
<dbReference type="GO" id="GO:0004252">
    <property type="term" value="F:serine-type endopeptidase activity"/>
    <property type="evidence" value="ECO:0007669"/>
    <property type="project" value="InterPro"/>
</dbReference>
<dbReference type="GO" id="GO:0034189">
    <property type="term" value="F:very-low-density lipoprotein particle binding"/>
    <property type="evidence" value="ECO:0000250"/>
    <property type="project" value="UniProtKB"/>
</dbReference>
<dbReference type="GO" id="GO:0006915">
    <property type="term" value="P:apoptotic process"/>
    <property type="evidence" value="ECO:0007669"/>
    <property type="project" value="UniProtKB-KW"/>
</dbReference>
<dbReference type="GO" id="GO:0008203">
    <property type="term" value="P:cholesterol metabolic process"/>
    <property type="evidence" value="ECO:0007669"/>
    <property type="project" value="UniProtKB-KW"/>
</dbReference>
<dbReference type="GO" id="GO:0032802">
    <property type="term" value="P:low-density lipoprotein particle receptor catabolic process"/>
    <property type="evidence" value="ECO:0000250"/>
    <property type="project" value="UniProtKB"/>
</dbReference>
<dbReference type="GO" id="GO:0006508">
    <property type="term" value="P:proteolysis"/>
    <property type="evidence" value="ECO:0007669"/>
    <property type="project" value="UniProtKB-KW"/>
</dbReference>
<dbReference type="GO" id="GO:0043523">
    <property type="term" value="P:regulation of neuron apoptotic process"/>
    <property type="evidence" value="ECO:0000250"/>
    <property type="project" value="UniProtKB"/>
</dbReference>
<dbReference type="CDD" id="cd16839">
    <property type="entry name" value="PCSK9_C-CRD"/>
    <property type="match status" value="1"/>
</dbReference>
<dbReference type="CDD" id="cd04077">
    <property type="entry name" value="Peptidases_S8_PCSK9_ProteinaseK_like"/>
    <property type="match status" value="1"/>
</dbReference>
<dbReference type="FunFam" id="2.60.120.690:FF:000001">
    <property type="entry name" value="Proprotein convertase subtilisin/kexin type 9"/>
    <property type="match status" value="1"/>
</dbReference>
<dbReference type="FunFam" id="3.30.70.80:FF:000004">
    <property type="entry name" value="Proprotein convertase subtilisin/kexin type 9"/>
    <property type="match status" value="1"/>
</dbReference>
<dbReference type="FunFam" id="3.40.50.200:FF:000016">
    <property type="entry name" value="Proprotein convertase subtilisin/kexin type 9"/>
    <property type="match status" value="1"/>
</dbReference>
<dbReference type="Gene3D" id="3.30.70.80">
    <property type="entry name" value="Peptidase S8 propeptide/proteinase inhibitor I9"/>
    <property type="match status" value="1"/>
</dbReference>
<dbReference type="Gene3D" id="3.40.50.200">
    <property type="entry name" value="Peptidase S8/S53 domain"/>
    <property type="match status" value="1"/>
</dbReference>
<dbReference type="Gene3D" id="2.60.120.690">
    <property type="entry name" value="Proprotein convertase subtilisin/kexin type 9"/>
    <property type="match status" value="1"/>
</dbReference>
<dbReference type="InterPro" id="IPR041254">
    <property type="entry name" value="PCSK9_C1"/>
</dbReference>
<dbReference type="InterPro" id="IPR041052">
    <property type="entry name" value="PCSK9_C2"/>
</dbReference>
<dbReference type="InterPro" id="IPR041051">
    <property type="entry name" value="PCSK9_C3"/>
</dbReference>
<dbReference type="InterPro" id="IPR034193">
    <property type="entry name" value="PCSK9_ProteinaseK-like"/>
</dbReference>
<dbReference type="InterPro" id="IPR000209">
    <property type="entry name" value="Peptidase_S8/S53_dom"/>
</dbReference>
<dbReference type="InterPro" id="IPR036852">
    <property type="entry name" value="Peptidase_S8/S53_dom_sf"/>
</dbReference>
<dbReference type="InterPro" id="IPR050131">
    <property type="entry name" value="Peptidase_S8_subtilisin-like"/>
</dbReference>
<dbReference type="InterPro" id="IPR015500">
    <property type="entry name" value="Peptidase_S8_subtilisin-rel"/>
</dbReference>
<dbReference type="InterPro" id="IPR010259">
    <property type="entry name" value="S8pro/Inhibitor_I9"/>
</dbReference>
<dbReference type="InterPro" id="IPR037045">
    <property type="entry name" value="S8pro/Inhibitor_I9_sf"/>
</dbReference>
<dbReference type="PANTHER" id="PTHR43806">
    <property type="entry name" value="PEPTIDASE S8"/>
    <property type="match status" value="1"/>
</dbReference>
<dbReference type="PANTHER" id="PTHR43806:SF60">
    <property type="entry name" value="PROPROTEIN CONVERTASE SUBTILISIN_KEXIN TYPE 9"/>
    <property type="match status" value="1"/>
</dbReference>
<dbReference type="Pfam" id="PF05922">
    <property type="entry name" value="Inhibitor_I9"/>
    <property type="match status" value="1"/>
</dbReference>
<dbReference type="Pfam" id="PF18459">
    <property type="entry name" value="PCSK9_C1"/>
    <property type="match status" value="1"/>
</dbReference>
<dbReference type="Pfam" id="PF18464">
    <property type="entry name" value="PCSK9_C2"/>
    <property type="match status" value="1"/>
</dbReference>
<dbReference type="Pfam" id="PF18463">
    <property type="entry name" value="PCSK9_C3"/>
    <property type="match status" value="1"/>
</dbReference>
<dbReference type="Pfam" id="PF00082">
    <property type="entry name" value="Peptidase_S8"/>
    <property type="match status" value="1"/>
</dbReference>
<dbReference type="PRINTS" id="PR00723">
    <property type="entry name" value="SUBTILISIN"/>
</dbReference>
<dbReference type="SUPFAM" id="SSF54897">
    <property type="entry name" value="Protease propeptides/inhibitors"/>
    <property type="match status" value="1"/>
</dbReference>
<dbReference type="SUPFAM" id="SSF52743">
    <property type="entry name" value="Subtilisin-like"/>
    <property type="match status" value="1"/>
</dbReference>
<dbReference type="PROSITE" id="PS51892">
    <property type="entry name" value="SUBTILASE"/>
    <property type="match status" value="1"/>
</dbReference>
<comment type="function">
    <text evidence="1">Crucial player in the regulation of plasma cholesterol homeostasis. Binds to low-density lipid receptor family members: low density lipoprotein receptor (LDLR), very low density lipoprotein receptor (VLDLR), apolipoprotein E receptor (LRP1/APOER) and apolipoprotein receptor 2 (LRP8/APOER2), and promotes their degradation in intracellular acidic compartments. Acts via a non-proteolytic mechanism to enhance the degradation of the hepatic LDLR through a clathrin LDLRAP1/ARH-mediated pathway. May prevent the recycling of LDLR from endosomes to the cell surface or direct it to lysosomes for degradation. Can induce ubiquitination of LDLR leading to its subsequent degradation. Inhibits intracellular degradation of APOB via the autophagosome/lysosome pathway in a LDLR-independent manner. Involved in the disposal of non-acetylated intermediates of BACE1 in the early secretory pathway. Inhibits epithelial Na(+) channel (ENaC)-mediated Na(+) absorption by reducing ENaC surface expression primarily by increasing its proteasomal degradation. Regulates neuronal apoptosis via modulation of LRP8/APOER2 levels and related anti-apoptotic signaling pathways (By similarity).</text>
</comment>
<comment type="cofactor">
    <cofactor evidence="1">
        <name>Ca(2+)</name>
        <dbReference type="ChEBI" id="CHEBI:29108"/>
    </cofactor>
</comment>
<comment type="activity regulation">
    <text evidence="1">Its proteolytic activity is autoinhibited by the non-covalent binding of the propeptide to the catalytic domain. Inhibited by EGTA (By similarity).</text>
</comment>
<comment type="subunit">
    <text evidence="2">Monomer. Can self-associate to form dimers and higher multimers which may have increased LDLR degrading activity. The precursor protein but not the mature protein may form multimers. Interacts with APOB, VLDLR, LRP8/APOER2 and BACE1. The full-length immature form (pro-PCSK9) interacts with SCNN1A, SCNN1B and SCNN1G. The pro-PCSK9 form (via C-terminal domain) interacts with LDLR. Interacts (via the C-terminal domain) with ANXA2 (via repeat Annexin 1); the interaction inhibits the degradation of LDLR.</text>
</comment>
<comment type="subcellular location">
    <subcellularLocation>
        <location evidence="1">Cytoplasm</location>
    </subcellularLocation>
    <subcellularLocation>
        <location evidence="1">Secreted</location>
    </subcellularLocation>
    <subcellularLocation>
        <location evidence="1">Endosome</location>
    </subcellularLocation>
    <subcellularLocation>
        <location evidence="1">Lysosome</location>
    </subcellularLocation>
    <subcellularLocation>
        <location evidence="1">Cell surface</location>
    </subcellularLocation>
    <subcellularLocation>
        <location evidence="1">Endoplasmic reticulum</location>
    </subcellularLocation>
    <subcellularLocation>
        <location evidence="1">Golgi apparatus</location>
    </subcellularLocation>
    <text evidence="1">Autocatalytic cleavage is required to transport it from the endoplasmic reticulum to the Golgi apparatus and for the secretion of the mature protein. Localizes to the endoplasmic reticulum in the absence of LDLR and colocalizes to the cell surface and to the endosomes/lysosomes in the presence of LDLR. The sorting to the cell surface and endosomes is required in order to fully promote LDLR degradation (By similarity).</text>
</comment>
<comment type="domain">
    <text evidence="1">The C-terminal domain (CRD) is essential for the LDLR-binding and degrading activities.</text>
</comment>
<comment type="domain">
    <text evidence="1">The catalytic domain is responsible for mediating its self-association.</text>
</comment>
<comment type="PTM">
    <text evidence="1">Cleavage by furin and PCSK5 generates a truncated inactive protein that is unable to induce LDLR degradation.</text>
</comment>
<comment type="PTM">
    <text evidence="1">Undergoes autocatalytic cleavage in the endoplasmic reticulum to release the propeptide from the N-terminus and the cleavage of the propeptide is strictly required for its maturation and activation. The cleaved propeptide however remains associated with the catalytic domain through non-covalent interactions, preventing potential substrates from accessing its active site. As a result, it is secreted from cells as a propeptide-containing, enzymatically inactive protein (By similarity).</text>
</comment>
<comment type="PTM">
    <text evidence="1">Phosphorylation protects the propeptide against proteolysis.</text>
</comment>
<comment type="similarity">
    <text evidence="5">Belongs to the peptidase S8 family.</text>
</comment>